<evidence type="ECO:0000250" key="1"/>
<evidence type="ECO:0000256" key="2">
    <source>
        <dbReference type="SAM" id="MobiDB-lite"/>
    </source>
</evidence>
<evidence type="ECO:0000269" key="3">
    <source>
    </source>
</evidence>
<evidence type="ECO:0000269" key="4">
    <source>
    </source>
</evidence>
<evidence type="ECO:0000305" key="5"/>
<protein>
    <recommendedName>
        <fullName evidence="5">Small ribosomal subunit protein uS13</fullName>
    </recommendedName>
    <alternativeName>
        <fullName>30S ribosomal protein S13</fullName>
    </alternativeName>
    <alternativeName>
        <fullName>BS14</fullName>
    </alternativeName>
</protein>
<accession>P15757</accession>
<reference key="1">
    <citation type="journal article" date="1988" name="Biochemistry">
        <title>Cross-linked amino acids in the protein pair S13-S19 and sequence analysis of protein S13 of Bacillus stearothermophilus ribosomes.</title>
        <authorList>
            <person name="Brockmoeller J."/>
            <person name="Kamp R.M."/>
        </authorList>
    </citation>
    <scope>PROTEIN SEQUENCE OF 2-120</scope>
    <scope>CROSS-LINKING TO S19</scope>
    <source>
        <strain>799</strain>
    </source>
</reference>
<reference key="2">
    <citation type="journal article" date="1974" name="FEBS Lett.">
        <title>Procaryotic ribosomal proteins: N-terminal sequence homologies and structural correspondence of 30 S ribosomal proteins from Escherichia coli and Bacillus stearothermophilus.</title>
        <authorList>
            <person name="Yaguchi M."/>
            <person name="Matheson A.T."/>
            <person name="Visentin L.P."/>
        </authorList>
    </citation>
    <scope>PROTEIN SEQUENCE OF 2-16</scope>
    <source>
        <strain>DSM 13240 / CIP 106956 / 10</strain>
    </source>
</reference>
<feature type="initiator methionine" description="Removed" evidence="3 4">
    <location>
        <position position="1"/>
    </location>
</feature>
<feature type="chain" id="PRO_0000132064" description="Small ribosomal subunit protein uS13">
    <location>
        <begin position="2"/>
        <end position="120"/>
    </location>
</feature>
<feature type="region of interest" description="Disordered" evidence="2">
    <location>
        <begin position="93"/>
        <end position="120"/>
    </location>
</feature>
<feature type="compositionally biased region" description="Basic residues" evidence="2">
    <location>
        <begin position="105"/>
        <end position="120"/>
    </location>
</feature>
<gene>
    <name type="primary">rpsM</name>
</gene>
<comment type="function">
    <text evidence="1">Located at the top of the head of the 30S subunit, it contacts several helices of the 16S rRNA. In the 70S ribosome it contacts the 23S rRNA (bridge B1a) and protein L5 of the 50S subunit (bridge B1b), connecting the 2 subunits; these bridges are implicated in subunit movement. Contacts the tRNA in the A and P-sites (By similarity).</text>
</comment>
<comment type="subunit">
    <text evidence="1">Part of the 30S ribosomal subunit. Has been shown to cross-link to S19 forming a loose heterodimer. Forms two bridges to the 50S subunit in the 70S ribosome (By similarity).</text>
</comment>
<comment type="similarity">
    <text evidence="5">Belongs to the universal ribosomal protein uS13 family.</text>
</comment>
<sequence>MARIAGVDIPRDKRVVISLTYIYGIGKPTAQILKEAGVSEDTRVRDLTEEELGRIREIVGRLKVEGDLRREVSLNIKRLMEIGCYRGLRHRRGLPVRGQNTKNNARTRKGPRRTVANKKK</sequence>
<keyword id="KW-0903">Direct protein sequencing</keyword>
<keyword id="KW-0687">Ribonucleoprotein</keyword>
<keyword id="KW-0689">Ribosomal protein</keyword>
<keyword id="KW-0694">RNA-binding</keyword>
<keyword id="KW-0699">rRNA-binding</keyword>
<keyword id="KW-0820">tRNA-binding</keyword>
<organism>
    <name type="scientific">Geobacillus stearothermophilus</name>
    <name type="common">Bacillus stearothermophilus</name>
    <dbReference type="NCBI Taxonomy" id="1422"/>
    <lineage>
        <taxon>Bacteria</taxon>
        <taxon>Bacillati</taxon>
        <taxon>Bacillota</taxon>
        <taxon>Bacilli</taxon>
        <taxon>Bacillales</taxon>
        <taxon>Anoxybacillaceae</taxon>
        <taxon>Geobacillus</taxon>
    </lineage>
</organism>
<proteinExistence type="evidence at protein level"/>
<dbReference type="PIR" id="A28679">
    <property type="entry name" value="R3BS3F"/>
</dbReference>
<dbReference type="SMR" id="P15757"/>
<dbReference type="GO" id="GO:0005829">
    <property type="term" value="C:cytosol"/>
    <property type="evidence" value="ECO:0007669"/>
    <property type="project" value="TreeGrafter"/>
</dbReference>
<dbReference type="GO" id="GO:0015935">
    <property type="term" value="C:small ribosomal subunit"/>
    <property type="evidence" value="ECO:0007669"/>
    <property type="project" value="TreeGrafter"/>
</dbReference>
<dbReference type="GO" id="GO:0019843">
    <property type="term" value="F:rRNA binding"/>
    <property type="evidence" value="ECO:0007669"/>
    <property type="project" value="UniProtKB-UniRule"/>
</dbReference>
<dbReference type="GO" id="GO:0003735">
    <property type="term" value="F:structural constituent of ribosome"/>
    <property type="evidence" value="ECO:0007669"/>
    <property type="project" value="InterPro"/>
</dbReference>
<dbReference type="GO" id="GO:0000049">
    <property type="term" value="F:tRNA binding"/>
    <property type="evidence" value="ECO:0007669"/>
    <property type="project" value="UniProtKB-UniRule"/>
</dbReference>
<dbReference type="GO" id="GO:0006412">
    <property type="term" value="P:translation"/>
    <property type="evidence" value="ECO:0007669"/>
    <property type="project" value="UniProtKB-UniRule"/>
</dbReference>
<dbReference type="FunFam" id="1.10.8.50:FF:000001">
    <property type="entry name" value="30S ribosomal protein S13"/>
    <property type="match status" value="1"/>
</dbReference>
<dbReference type="FunFam" id="4.10.910.10:FF:000001">
    <property type="entry name" value="30S ribosomal protein S13"/>
    <property type="match status" value="1"/>
</dbReference>
<dbReference type="Gene3D" id="1.10.8.50">
    <property type="match status" value="1"/>
</dbReference>
<dbReference type="Gene3D" id="4.10.910.10">
    <property type="entry name" value="30s ribosomal protein s13, domain 2"/>
    <property type="match status" value="1"/>
</dbReference>
<dbReference type="HAMAP" id="MF_01315">
    <property type="entry name" value="Ribosomal_uS13"/>
    <property type="match status" value="1"/>
</dbReference>
<dbReference type="InterPro" id="IPR027437">
    <property type="entry name" value="Rbsml_uS13_C"/>
</dbReference>
<dbReference type="InterPro" id="IPR001892">
    <property type="entry name" value="Ribosomal_uS13"/>
</dbReference>
<dbReference type="InterPro" id="IPR010979">
    <property type="entry name" value="Ribosomal_uS13-like_H2TH"/>
</dbReference>
<dbReference type="InterPro" id="IPR019980">
    <property type="entry name" value="Ribosomal_uS13_bac-type"/>
</dbReference>
<dbReference type="InterPro" id="IPR018269">
    <property type="entry name" value="Ribosomal_uS13_CS"/>
</dbReference>
<dbReference type="NCBIfam" id="TIGR03631">
    <property type="entry name" value="uS13_bact"/>
    <property type="match status" value="1"/>
</dbReference>
<dbReference type="PANTHER" id="PTHR10871">
    <property type="entry name" value="30S RIBOSOMAL PROTEIN S13/40S RIBOSOMAL PROTEIN S18"/>
    <property type="match status" value="1"/>
</dbReference>
<dbReference type="PANTHER" id="PTHR10871:SF1">
    <property type="entry name" value="SMALL RIBOSOMAL SUBUNIT PROTEIN US13M"/>
    <property type="match status" value="1"/>
</dbReference>
<dbReference type="Pfam" id="PF00416">
    <property type="entry name" value="Ribosomal_S13"/>
    <property type="match status" value="1"/>
</dbReference>
<dbReference type="PIRSF" id="PIRSF002134">
    <property type="entry name" value="Ribosomal_S13"/>
    <property type="match status" value="1"/>
</dbReference>
<dbReference type="SUPFAM" id="SSF46946">
    <property type="entry name" value="S13-like H2TH domain"/>
    <property type="match status" value="1"/>
</dbReference>
<dbReference type="PROSITE" id="PS00646">
    <property type="entry name" value="RIBOSOMAL_S13_1"/>
    <property type="match status" value="1"/>
</dbReference>
<dbReference type="PROSITE" id="PS50159">
    <property type="entry name" value="RIBOSOMAL_S13_2"/>
    <property type="match status" value="1"/>
</dbReference>
<name>RS13_GEOSE</name>